<proteinExistence type="inferred from homology"/>
<evidence type="ECO:0000255" key="1">
    <source>
        <dbReference type="HAMAP-Rule" id="MF_00033"/>
    </source>
</evidence>
<feature type="chain" id="PRO_1000090445" description="UDP-N-acetylglucosamine--N-acetylmuramyl-(pentapeptide) pyrophosphoryl-undecaprenol N-acetylglucosamine transferase">
    <location>
        <begin position="1"/>
        <end position="369"/>
    </location>
</feature>
<feature type="binding site" evidence="1">
    <location>
        <begin position="10"/>
        <end position="12"/>
    </location>
    <ligand>
        <name>UDP-N-acetyl-alpha-D-glucosamine</name>
        <dbReference type="ChEBI" id="CHEBI:57705"/>
    </ligand>
</feature>
<feature type="binding site" evidence="1">
    <location>
        <position position="124"/>
    </location>
    <ligand>
        <name>UDP-N-acetyl-alpha-D-glucosamine</name>
        <dbReference type="ChEBI" id="CHEBI:57705"/>
    </ligand>
</feature>
<feature type="binding site" evidence="1">
    <location>
        <position position="195"/>
    </location>
    <ligand>
        <name>UDP-N-acetyl-alpha-D-glucosamine</name>
        <dbReference type="ChEBI" id="CHEBI:57705"/>
    </ligand>
</feature>
<feature type="binding site" evidence="1">
    <location>
        <position position="252"/>
    </location>
    <ligand>
        <name>UDP-N-acetyl-alpha-D-glucosamine</name>
        <dbReference type="ChEBI" id="CHEBI:57705"/>
    </ligand>
</feature>
<feature type="binding site" evidence="1">
    <location>
        <position position="297"/>
    </location>
    <ligand>
        <name>UDP-N-acetyl-alpha-D-glucosamine</name>
        <dbReference type="ChEBI" id="CHEBI:57705"/>
    </ligand>
</feature>
<sequence>MRVILSGGGTGGHIYPALALAEVIKQHEPDAEFLYVGSERGVEANIVPKTGMAFKQLAVQGFSRSLSLHNIKTVQLFLKAVKVSKKIIKEFKPDVVIGTGGYVAGAVVYAAQRMNIPTVIHEQNSVAGVTNKFLARGATKIGVAFEVAKQQFPSEKVVLVGNPRAQQVAQLKSTFSWQTIGLRDDKATVLIFGGSQGAPAINLAVIDAIPEFNERSYQVVIVTGPKRYDNVLDLLRERNIEAADNIRILPYIDNMPNVLKQTDAIVSRAGATSIAEITALGIPSILIPSLHVTGDHQTKNAQSLVDVGAAINITESDLNGQSLIAAVDTLLLDENVSDKMAAQATKVGMPDAGERLYQLILQAMANKKD</sequence>
<gene>
    <name evidence="1" type="primary">murG</name>
    <name type="ordered locus">LCK_00529</name>
</gene>
<organism>
    <name type="scientific">Leuconostoc citreum (strain KM20)</name>
    <dbReference type="NCBI Taxonomy" id="349519"/>
    <lineage>
        <taxon>Bacteria</taxon>
        <taxon>Bacillati</taxon>
        <taxon>Bacillota</taxon>
        <taxon>Bacilli</taxon>
        <taxon>Lactobacillales</taxon>
        <taxon>Lactobacillaceae</taxon>
        <taxon>Leuconostoc</taxon>
    </lineage>
</organism>
<dbReference type="EC" id="2.4.1.227" evidence="1"/>
<dbReference type="EMBL" id="DQ489736">
    <property type="protein sequence ID" value="ACA82362.1"/>
    <property type="molecule type" value="Genomic_DNA"/>
</dbReference>
<dbReference type="RefSeq" id="WP_004900478.1">
    <property type="nucleotide sequence ID" value="NC_010471.1"/>
</dbReference>
<dbReference type="SMR" id="B1MXW0"/>
<dbReference type="STRING" id="349519.LCK_00529"/>
<dbReference type="CAZy" id="GT28">
    <property type="family name" value="Glycosyltransferase Family 28"/>
</dbReference>
<dbReference type="KEGG" id="lci:LCK_00529"/>
<dbReference type="eggNOG" id="COG0707">
    <property type="taxonomic scope" value="Bacteria"/>
</dbReference>
<dbReference type="HOGENOM" id="CLU_037404_0_1_9"/>
<dbReference type="OrthoDB" id="9808936at2"/>
<dbReference type="UniPathway" id="UPA00219"/>
<dbReference type="Proteomes" id="UP000002166">
    <property type="component" value="Chromosome"/>
</dbReference>
<dbReference type="GO" id="GO:0005886">
    <property type="term" value="C:plasma membrane"/>
    <property type="evidence" value="ECO:0007669"/>
    <property type="project" value="UniProtKB-SubCell"/>
</dbReference>
<dbReference type="GO" id="GO:0050511">
    <property type="term" value="F:undecaprenyldiphospho-muramoylpentapeptide beta-N-acetylglucosaminyltransferase activity"/>
    <property type="evidence" value="ECO:0007669"/>
    <property type="project" value="UniProtKB-UniRule"/>
</dbReference>
<dbReference type="GO" id="GO:0005975">
    <property type="term" value="P:carbohydrate metabolic process"/>
    <property type="evidence" value="ECO:0007669"/>
    <property type="project" value="InterPro"/>
</dbReference>
<dbReference type="GO" id="GO:0051301">
    <property type="term" value="P:cell division"/>
    <property type="evidence" value="ECO:0007669"/>
    <property type="project" value="UniProtKB-KW"/>
</dbReference>
<dbReference type="GO" id="GO:0071555">
    <property type="term" value="P:cell wall organization"/>
    <property type="evidence" value="ECO:0007669"/>
    <property type="project" value="UniProtKB-KW"/>
</dbReference>
<dbReference type="GO" id="GO:0030259">
    <property type="term" value="P:lipid glycosylation"/>
    <property type="evidence" value="ECO:0007669"/>
    <property type="project" value="UniProtKB-UniRule"/>
</dbReference>
<dbReference type="GO" id="GO:0009252">
    <property type="term" value="P:peptidoglycan biosynthetic process"/>
    <property type="evidence" value="ECO:0007669"/>
    <property type="project" value="UniProtKB-UniRule"/>
</dbReference>
<dbReference type="GO" id="GO:0008360">
    <property type="term" value="P:regulation of cell shape"/>
    <property type="evidence" value="ECO:0007669"/>
    <property type="project" value="UniProtKB-KW"/>
</dbReference>
<dbReference type="CDD" id="cd03785">
    <property type="entry name" value="GT28_MurG"/>
    <property type="match status" value="1"/>
</dbReference>
<dbReference type="Gene3D" id="3.40.50.2000">
    <property type="entry name" value="Glycogen Phosphorylase B"/>
    <property type="match status" value="2"/>
</dbReference>
<dbReference type="HAMAP" id="MF_00033">
    <property type="entry name" value="MurG"/>
    <property type="match status" value="1"/>
</dbReference>
<dbReference type="InterPro" id="IPR006009">
    <property type="entry name" value="GlcNAc_MurG"/>
</dbReference>
<dbReference type="InterPro" id="IPR007235">
    <property type="entry name" value="Glyco_trans_28_C"/>
</dbReference>
<dbReference type="InterPro" id="IPR004276">
    <property type="entry name" value="GlycoTrans_28_N"/>
</dbReference>
<dbReference type="NCBIfam" id="TIGR01133">
    <property type="entry name" value="murG"/>
    <property type="match status" value="1"/>
</dbReference>
<dbReference type="PANTHER" id="PTHR21015:SF22">
    <property type="entry name" value="GLYCOSYLTRANSFERASE"/>
    <property type="match status" value="1"/>
</dbReference>
<dbReference type="PANTHER" id="PTHR21015">
    <property type="entry name" value="UDP-N-ACETYLGLUCOSAMINE--N-ACETYLMURAMYL-(PENTAPEPTIDE) PYROPHOSPHORYL-UNDECAPRENOL N-ACETYLGLUCOSAMINE TRANSFERASE 1"/>
    <property type="match status" value="1"/>
</dbReference>
<dbReference type="Pfam" id="PF04101">
    <property type="entry name" value="Glyco_tran_28_C"/>
    <property type="match status" value="1"/>
</dbReference>
<dbReference type="Pfam" id="PF03033">
    <property type="entry name" value="Glyco_transf_28"/>
    <property type="match status" value="1"/>
</dbReference>
<dbReference type="SUPFAM" id="SSF53756">
    <property type="entry name" value="UDP-Glycosyltransferase/glycogen phosphorylase"/>
    <property type="match status" value="1"/>
</dbReference>
<protein>
    <recommendedName>
        <fullName evidence="1">UDP-N-acetylglucosamine--N-acetylmuramyl-(pentapeptide) pyrophosphoryl-undecaprenol N-acetylglucosamine transferase</fullName>
        <ecNumber evidence="1">2.4.1.227</ecNumber>
    </recommendedName>
    <alternativeName>
        <fullName evidence="1">Undecaprenyl-PP-MurNAc-pentapeptide-UDPGlcNAc GlcNAc transferase</fullName>
    </alternativeName>
</protein>
<comment type="function">
    <text evidence="1">Cell wall formation. Catalyzes the transfer of a GlcNAc subunit on undecaprenyl-pyrophosphoryl-MurNAc-pentapeptide (lipid intermediate I) to form undecaprenyl-pyrophosphoryl-MurNAc-(pentapeptide)GlcNAc (lipid intermediate II).</text>
</comment>
<comment type="catalytic activity">
    <reaction evidence="1">
        <text>Mur2Ac(oyl-L-Ala-gamma-D-Glu-L-Lys-D-Ala-D-Ala)-di-trans,octa-cis-undecaprenyl diphosphate + UDP-N-acetyl-alpha-D-glucosamine = beta-D-GlcNAc-(1-&gt;4)-Mur2Ac(oyl-L-Ala-gamma-D-Glu-L-Lys-D-Ala-D-Ala)-di-trans,octa-cis-undecaprenyl diphosphate + UDP + H(+)</text>
        <dbReference type="Rhea" id="RHEA:23192"/>
        <dbReference type="ChEBI" id="CHEBI:15378"/>
        <dbReference type="ChEBI" id="CHEBI:57705"/>
        <dbReference type="ChEBI" id="CHEBI:58223"/>
        <dbReference type="ChEBI" id="CHEBI:60032"/>
        <dbReference type="ChEBI" id="CHEBI:60033"/>
        <dbReference type="EC" id="2.4.1.227"/>
    </reaction>
</comment>
<comment type="pathway">
    <text evidence="1">Cell wall biogenesis; peptidoglycan biosynthesis.</text>
</comment>
<comment type="subcellular location">
    <subcellularLocation>
        <location evidence="1">Cell membrane</location>
        <topology evidence="1">Peripheral membrane protein</topology>
        <orientation evidence="1">Cytoplasmic side</orientation>
    </subcellularLocation>
</comment>
<comment type="similarity">
    <text evidence="1">Belongs to the glycosyltransferase 28 family. MurG subfamily.</text>
</comment>
<name>MURG_LEUCK</name>
<accession>B1MXW0</accession>
<reference key="1">
    <citation type="journal article" date="2008" name="J. Bacteriol.">
        <title>Complete genome sequence of Leuconostoc citreum KM20.</title>
        <authorList>
            <person name="Kim J.F."/>
            <person name="Jeong H."/>
            <person name="Lee J.-S."/>
            <person name="Choi S.-H."/>
            <person name="Ha M."/>
            <person name="Hur C.-G."/>
            <person name="Kim J.-S."/>
            <person name="Lee S."/>
            <person name="Park H.-S."/>
            <person name="Park Y.-H."/>
            <person name="Oh T.K."/>
        </authorList>
    </citation>
    <scope>NUCLEOTIDE SEQUENCE [LARGE SCALE GENOMIC DNA]</scope>
    <source>
        <strain>KM20</strain>
    </source>
</reference>
<keyword id="KW-0131">Cell cycle</keyword>
<keyword id="KW-0132">Cell division</keyword>
<keyword id="KW-1003">Cell membrane</keyword>
<keyword id="KW-0133">Cell shape</keyword>
<keyword id="KW-0961">Cell wall biogenesis/degradation</keyword>
<keyword id="KW-0328">Glycosyltransferase</keyword>
<keyword id="KW-0472">Membrane</keyword>
<keyword id="KW-0573">Peptidoglycan synthesis</keyword>
<keyword id="KW-1185">Reference proteome</keyword>
<keyword id="KW-0808">Transferase</keyword>